<reference key="1">
    <citation type="journal article" date="1994" name="J. Protein Chem.">
        <title>Porcine liver low M(r) phosphotyrosine protein phosphatase: the amino acid sequence.</title>
        <authorList>
            <person name="Caselli A."/>
            <person name="Pazzagli L."/>
            <person name="Paoli P."/>
            <person name="Manao G."/>
            <person name="Camici G."/>
            <person name="Cappugi G."/>
            <person name="Ramponi G."/>
        </authorList>
    </citation>
    <scope>PROTEIN SEQUENCE OF 2-158</scope>
    <source>
        <tissue>Liver</tissue>
    </source>
</reference>
<evidence type="ECO:0000250" key="1">
    <source>
        <dbReference type="UniProtKB" id="P11064"/>
    </source>
</evidence>
<evidence type="ECO:0000250" key="2">
    <source>
        <dbReference type="UniProtKB" id="P24666"/>
    </source>
</evidence>
<evidence type="ECO:0000269" key="3">
    <source>
    </source>
</evidence>
<evidence type="ECO:0000305" key="4"/>
<keyword id="KW-0007">Acetylation</keyword>
<keyword id="KW-0963">Cytoplasm</keyword>
<keyword id="KW-0903">Direct protein sequencing</keyword>
<keyword id="KW-0378">Hydrolase</keyword>
<keyword id="KW-0597">Phosphoprotein</keyword>
<keyword id="KW-0904">Protein phosphatase</keyword>
<keyword id="KW-1185">Reference proteome</keyword>
<proteinExistence type="evidence at protein level"/>
<dbReference type="EC" id="3.1.3.48" evidence="2"/>
<dbReference type="EC" id="3.1.3.2"/>
<dbReference type="RefSeq" id="XP_003481358.1">
    <property type="nucleotide sequence ID" value="XM_003481310.3"/>
</dbReference>
<dbReference type="SMR" id="P81693"/>
<dbReference type="FunCoup" id="P81693">
    <property type="interactions" value="1207"/>
</dbReference>
<dbReference type="STRING" id="9823.ENSSSCP00000009232"/>
<dbReference type="PaxDb" id="9823-ENSSSCP00000009231"/>
<dbReference type="PeptideAtlas" id="P81693"/>
<dbReference type="Ensembl" id="ENSSSCT00000095848.1">
    <property type="protein sequence ID" value="ENSSSCP00000077301.1"/>
    <property type="gene ID" value="ENSSSCG00000008659.5"/>
</dbReference>
<dbReference type="Ensembl" id="ENSSSCT00015098433.1">
    <property type="protein sequence ID" value="ENSSSCP00015040539.1"/>
    <property type="gene ID" value="ENSSSCG00015073160.1"/>
</dbReference>
<dbReference type="Ensembl" id="ENSSSCT00040084873.1">
    <property type="protein sequence ID" value="ENSSSCP00040037061.1"/>
    <property type="gene ID" value="ENSSSCG00040062216.1"/>
</dbReference>
<dbReference type="Ensembl" id="ENSSSCT00050051325.1">
    <property type="protein sequence ID" value="ENSSSCP00050021527.1"/>
    <property type="gene ID" value="ENSSSCG00050038047.1"/>
</dbReference>
<dbReference type="Ensembl" id="ENSSSCT00070035716.1">
    <property type="protein sequence ID" value="ENSSSCP00070029841.1"/>
    <property type="gene ID" value="ENSSSCG00070018094.1"/>
</dbReference>
<dbReference type="Ensembl" id="ENSSSCT00115018701">
    <property type="protein sequence ID" value="ENSSSCP00115017678"/>
    <property type="gene ID" value="ENSSSCG00115010814"/>
</dbReference>
<dbReference type="GeneID" id="100737301"/>
<dbReference type="KEGG" id="ssc:100737301"/>
<dbReference type="CTD" id="52"/>
<dbReference type="VGNC" id="VGNC:96914">
    <property type="gene designation" value="ACP1"/>
</dbReference>
<dbReference type="eggNOG" id="KOG3217">
    <property type="taxonomic scope" value="Eukaryota"/>
</dbReference>
<dbReference type="GeneTree" id="ENSGT00940000158351"/>
<dbReference type="HOGENOM" id="CLU_071415_2_0_1"/>
<dbReference type="InParanoid" id="P81693"/>
<dbReference type="OMA" id="YQQVTRF"/>
<dbReference type="OrthoDB" id="3388at2759"/>
<dbReference type="TreeFam" id="TF353727"/>
<dbReference type="Proteomes" id="UP000008227">
    <property type="component" value="Chromosome 3"/>
</dbReference>
<dbReference type="Proteomes" id="UP000314985">
    <property type="component" value="Chromosome 3"/>
</dbReference>
<dbReference type="Proteomes" id="UP000694570">
    <property type="component" value="Unplaced"/>
</dbReference>
<dbReference type="Proteomes" id="UP000694571">
    <property type="component" value="Unplaced"/>
</dbReference>
<dbReference type="Proteomes" id="UP000694720">
    <property type="component" value="Unplaced"/>
</dbReference>
<dbReference type="Proteomes" id="UP000694722">
    <property type="component" value="Unplaced"/>
</dbReference>
<dbReference type="Proteomes" id="UP000694723">
    <property type="component" value="Unplaced"/>
</dbReference>
<dbReference type="Proteomes" id="UP000694724">
    <property type="component" value="Unplaced"/>
</dbReference>
<dbReference type="Proteomes" id="UP000694725">
    <property type="component" value="Unplaced"/>
</dbReference>
<dbReference type="Proteomes" id="UP000694726">
    <property type="component" value="Unplaced"/>
</dbReference>
<dbReference type="Proteomes" id="UP000694727">
    <property type="component" value="Unplaced"/>
</dbReference>
<dbReference type="Proteomes" id="UP000694728">
    <property type="component" value="Unplaced"/>
</dbReference>
<dbReference type="GO" id="GO:0005737">
    <property type="term" value="C:cytoplasm"/>
    <property type="evidence" value="ECO:0007669"/>
    <property type="project" value="UniProtKB-SubCell"/>
</dbReference>
<dbReference type="GO" id="GO:0003993">
    <property type="term" value="F:acid phosphatase activity"/>
    <property type="evidence" value="ECO:0000250"/>
    <property type="project" value="UniProtKB"/>
</dbReference>
<dbReference type="GO" id="GO:0004726">
    <property type="term" value="F:non-membrane spanning protein tyrosine phosphatase activity"/>
    <property type="evidence" value="ECO:0007669"/>
    <property type="project" value="InterPro"/>
</dbReference>
<dbReference type="GO" id="GO:0004725">
    <property type="term" value="F:protein tyrosine phosphatase activity"/>
    <property type="evidence" value="ECO:0000250"/>
    <property type="project" value="UniProtKB"/>
</dbReference>
<dbReference type="CDD" id="cd16343">
    <property type="entry name" value="LMWPTP"/>
    <property type="match status" value="1"/>
</dbReference>
<dbReference type="FunFam" id="3.40.50.2300:FF:000105">
    <property type="entry name" value="Low molecular weight phosphotyrosine protein"/>
    <property type="match status" value="1"/>
</dbReference>
<dbReference type="Gene3D" id="3.40.50.2300">
    <property type="match status" value="1"/>
</dbReference>
<dbReference type="InterPro" id="IPR050438">
    <property type="entry name" value="LMW_PTPase"/>
</dbReference>
<dbReference type="InterPro" id="IPR023485">
    <property type="entry name" value="Ptyr_pPase"/>
</dbReference>
<dbReference type="InterPro" id="IPR036196">
    <property type="entry name" value="Ptyr_pPase_sf"/>
</dbReference>
<dbReference type="InterPro" id="IPR002115">
    <property type="entry name" value="Tyr_Pase_low_mol_wt_mml"/>
</dbReference>
<dbReference type="InterPro" id="IPR017867">
    <property type="entry name" value="Tyr_phospatase_low_mol_wt"/>
</dbReference>
<dbReference type="PANTHER" id="PTHR11717:SF35">
    <property type="entry name" value="LOW MOLECULAR WEIGHT PHOSPHOTYROSINE PROTEIN PHOSPHATASE"/>
    <property type="match status" value="1"/>
</dbReference>
<dbReference type="PANTHER" id="PTHR11717">
    <property type="entry name" value="LOW MOLECULAR WEIGHT PROTEIN TYROSINE PHOSPHATASE"/>
    <property type="match status" value="1"/>
</dbReference>
<dbReference type="Pfam" id="PF01451">
    <property type="entry name" value="LMWPc"/>
    <property type="match status" value="1"/>
</dbReference>
<dbReference type="PRINTS" id="PR00719">
    <property type="entry name" value="LMWPTPASE"/>
</dbReference>
<dbReference type="PRINTS" id="PR00720">
    <property type="entry name" value="MAMMALPTPASE"/>
</dbReference>
<dbReference type="SMART" id="SM00226">
    <property type="entry name" value="LMWPc"/>
    <property type="match status" value="1"/>
</dbReference>
<dbReference type="SUPFAM" id="SSF52788">
    <property type="entry name" value="Phosphotyrosine protein phosphatases I"/>
    <property type="match status" value="1"/>
</dbReference>
<accession>P81693</accession>
<gene>
    <name type="primary">ACP1</name>
</gene>
<feature type="initiator methionine" description="Removed" evidence="1 3">
    <location>
        <position position="1"/>
    </location>
</feature>
<feature type="chain" id="PRO_0000046560" description="Low molecular weight phosphotyrosine protein phosphatase">
    <location>
        <begin position="2"/>
        <end position="158"/>
    </location>
</feature>
<feature type="active site" description="Nucleophile" evidence="1">
    <location>
        <position position="13"/>
    </location>
</feature>
<feature type="active site" evidence="1">
    <location>
        <position position="19"/>
    </location>
</feature>
<feature type="active site" description="Proton donor" evidence="1">
    <location>
        <position position="130"/>
    </location>
</feature>
<feature type="modified residue" description="N-acetylalanine" evidence="1">
    <location>
        <position position="2"/>
    </location>
</feature>
<feature type="modified residue" description="Phosphotyrosine" evidence="2">
    <location>
        <position position="132"/>
    </location>
</feature>
<feature type="modified residue" description="Phosphotyrosine" evidence="2">
    <location>
        <position position="133"/>
    </location>
</feature>
<comment type="function">
    <text evidence="2">Acts on tyrosine phosphorylated proteins, low-MW aryl phosphates and natural and synthetic acyl phosphates with differences in substrate specificity between isoform 1 and isoform 2.</text>
</comment>
<comment type="catalytic activity">
    <reaction evidence="2">
        <text>O-phospho-L-tyrosyl-[protein] + H2O = L-tyrosyl-[protein] + phosphate</text>
        <dbReference type="Rhea" id="RHEA:10684"/>
        <dbReference type="Rhea" id="RHEA-COMP:10136"/>
        <dbReference type="Rhea" id="RHEA-COMP:20101"/>
        <dbReference type="ChEBI" id="CHEBI:15377"/>
        <dbReference type="ChEBI" id="CHEBI:43474"/>
        <dbReference type="ChEBI" id="CHEBI:46858"/>
        <dbReference type="ChEBI" id="CHEBI:61978"/>
        <dbReference type="EC" id="3.1.3.48"/>
    </reaction>
    <physiologicalReaction direction="left-to-right" evidence="2">
        <dbReference type="Rhea" id="RHEA:10685"/>
    </physiologicalReaction>
</comment>
<comment type="catalytic activity">
    <reaction evidence="2">
        <text>a phosphate monoester + H2O = an alcohol + phosphate</text>
        <dbReference type="Rhea" id="RHEA:15017"/>
        <dbReference type="ChEBI" id="CHEBI:15377"/>
        <dbReference type="ChEBI" id="CHEBI:30879"/>
        <dbReference type="ChEBI" id="CHEBI:43474"/>
        <dbReference type="ChEBI" id="CHEBI:67140"/>
        <dbReference type="EC" id="3.1.3.2"/>
    </reaction>
    <physiologicalReaction direction="left-to-right" evidence="2">
        <dbReference type="Rhea" id="RHEA:15018"/>
    </physiologicalReaction>
</comment>
<comment type="activity regulation">
    <text evidence="2">Inhibited by sulfhydryl reagents.</text>
</comment>
<comment type="subunit">
    <text evidence="2">Interacts with EPHA2; dephosphorylates EPHA2. Interacts with EPHB1. Interacts with the SH3 domain of SPTAN1.</text>
</comment>
<comment type="subcellular location">
    <subcellularLocation>
        <location evidence="2">Cytoplasm</location>
    </subcellularLocation>
</comment>
<comment type="PTM">
    <text evidence="2">Phosphorylated by LCK. Phosphorylation at Tyr-132 increases its phosphatase activity.</text>
</comment>
<comment type="similarity">
    <text evidence="4">Belongs to the low molecular weight phosphotyrosine protein phosphatase family.</text>
</comment>
<organism>
    <name type="scientific">Sus scrofa</name>
    <name type="common">Pig</name>
    <dbReference type="NCBI Taxonomy" id="9823"/>
    <lineage>
        <taxon>Eukaryota</taxon>
        <taxon>Metazoa</taxon>
        <taxon>Chordata</taxon>
        <taxon>Craniata</taxon>
        <taxon>Vertebrata</taxon>
        <taxon>Euteleostomi</taxon>
        <taxon>Mammalia</taxon>
        <taxon>Eutheria</taxon>
        <taxon>Laurasiatheria</taxon>
        <taxon>Artiodactyla</taxon>
        <taxon>Suina</taxon>
        <taxon>Suidae</taxon>
        <taxon>Sus</taxon>
    </lineage>
</organism>
<protein>
    <recommendedName>
        <fullName evidence="4">Low molecular weight phosphotyrosine protein phosphatase</fullName>
        <shortName>LMW-PTP</shortName>
        <shortName>LMW-PTPase</shortName>
        <ecNumber evidence="2">3.1.3.48</ecNumber>
    </recommendedName>
    <alternativeName>
        <fullName>Low molecular weight cytosolic acid phosphatase</fullName>
        <ecNumber>3.1.3.2</ecNumber>
    </alternativeName>
</protein>
<name>PPAC_PIG</name>
<sequence>MAEQVTKSVLFVCLGNICRSPIAEAVFRKLVTDQNVSDNWVIDSSAVSDWNVGRSPDPRAVSCLRHHGINTAHKARQITKEDFATFDYILCMDESNLRDLNRKGNQVKNCRAKIELLGSYDPQKQLIIEDPYYGNDSDFEAVYQQCVRCCRAFLEKVR</sequence>